<keyword id="KW-0963">Cytoplasm</keyword>
<keyword id="KW-0489">Methyltransferase</keyword>
<keyword id="KW-0496">Mitochondrion</keyword>
<keyword id="KW-0539">Nucleus</keyword>
<keyword id="KW-1185">Reference proteome</keyword>
<keyword id="KW-0949">S-adenosyl-L-methionine</keyword>
<keyword id="KW-0808">Transferase</keyword>
<keyword id="KW-0819">tRNA processing</keyword>
<reference key="1">
    <citation type="journal article" date="2008" name="Nature">
        <title>The Phaeodactylum genome reveals the evolutionary history of diatom genomes.</title>
        <authorList>
            <person name="Bowler C."/>
            <person name="Allen A.E."/>
            <person name="Badger J.H."/>
            <person name="Grimwood J."/>
            <person name="Jabbari K."/>
            <person name="Kuo A."/>
            <person name="Maheswari U."/>
            <person name="Martens C."/>
            <person name="Maumus F."/>
            <person name="Otillar R.P."/>
            <person name="Rayko E."/>
            <person name="Salamov A."/>
            <person name="Vandepoele K."/>
            <person name="Beszteri B."/>
            <person name="Gruber A."/>
            <person name="Heijde M."/>
            <person name="Katinka M."/>
            <person name="Mock T."/>
            <person name="Valentin K."/>
            <person name="Verret F."/>
            <person name="Berges J.A."/>
            <person name="Brownlee C."/>
            <person name="Cadoret J.P."/>
            <person name="Chiovitti A."/>
            <person name="Choi C.J."/>
            <person name="Coesel S."/>
            <person name="De Martino A."/>
            <person name="Detter J.C."/>
            <person name="Durkin C."/>
            <person name="Falciatore A."/>
            <person name="Fournet J."/>
            <person name="Haruta M."/>
            <person name="Huysman M.J."/>
            <person name="Jenkins B.D."/>
            <person name="Jiroutova K."/>
            <person name="Jorgensen R.E."/>
            <person name="Joubert Y."/>
            <person name="Kaplan A."/>
            <person name="Kroger N."/>
            <person name="Kroth P.G."/>
            <person name="La Roche J."/>
            <person name="Lindquist E."/>
            <person name="Lommer M."/>
            <person name="Martin-Jezequel V."/>
            <person name="Lopez P.J."/>
            <person name="Lucas S."/>
            <person name="Mangogna M."/>
            <person name="McGinnis K."/>
            <person name="Medlin L.K."/>
            <person name="Montsant A."/>
            <person name="Oudot-Le Secq M.P."/>
            <person name="Napoli C."/>
            <person name="Obornik M."/>
            <person name="Parker M.S."/>
            <person name="Petit J.L."/>
            <person name="Porcel B.M."/>
            <person name="Poulsen N."/>
            <person name="Robison M."/>
            <person name="Rychlewski L."/>
            <person name="Rynearson T.A."/>
            <person name="Schmutz J."/>
            <person name="Shapiro H."/>
            <person name="Siaut M."/>
            <person name="Stanley M."/>
            <person name="Sussman M.R."/>
            <person name="Taylor A.R."/>
            <person name="Vardi A."/>
            <person name="von Dassow P."/>
            <person name="Vyverman W."/>
            <person name="Willis A."/>
            <person name="Wyrwicz L.S."/>
            <person name="Rokhsar D.S."/>
            <person name="Weissenbach J."/>
            <person name="Armbrust E.V."/>
            <person name="Green B.R."/>
            <person name="Van de Peer Y."/>
            <person name="Grigoriev I.V."/>
        </authorList>
    </citation>
    <scope>NUCLEOTIDE SEQUENCE [LARGE SCALE GENOMIC DNA]</scope>
    <source>
        <strain>CCAP 1055/1</strain>
    </source>
</reference>
<reference key="2">
    <citation type="submission" date="2008-08" db="EMBL/GenBank/DDBJ databases">
        <authorList>
            <consortium name="Diatom Consortium"/>
            <person name="Grigoriev I."/>
            <person name="Grimwood J."/>
            <person name="Kuo A."/>
            <person name="Otillar R.P."/>
            <person name="Salamov A."/>
            <person name="Detter J.C."/>
            <person name="Lindquist E."/>
            <person name="Shapiro H."/>
            <person name="Lucas S."/>
            <person name="Glavina del Rio T."/>
            <person name="Pitluck S."/>
            <person name="Rokhsar D."/>
            <person name="Bowler C."/>
        </authorList>
    </citation>
    <scope>GENOME REANNOTATION</scope>
    <source>
        <strain>CCAP 1055/1</strain>
    </source>
</reference>
<comment type="function">
    <text evidence="1">Specifically methylates the N1 position of guanosine-37 in various cytoplasmic and mitochondrial tRNAs. Methylation is not dependent on the nature of the nucleoside 5' of the target nucleoside. This is the first step in the biosynthesis of wybutosine (yW), a modified base adjacent to the anticodon of tRNAs and required for accurate decoding.</text>
</comment>
<comment type="catalytic activity">
    <reaction evidence="1">
        <text>guanosine(37) in tRNA + S-adenosyl-L-methionine = N(1)-methylguanosine(37) in tRNA + S-adenosyl-L-homocysteine + H(+)</text>
        <dbReference type="Rhea" id="RHEA:36899"/>
        <dbReference type="Rhea" id="RHEA-COMP:10145"/>
        <dbReference type="Rhea" id="RHEA-COMP:10147"/>
        <dbReference type="ChEBI" id="CHEBI:15378"/>
        <dbReference type="ChEBI" id="CHEBI:57856"/>
        <dbReference type="ChEBI" id="CHEBI:59789"/>
        <dbReference type="ChEBI" id="CHEBI:73542"/>
        <dbReference type="ChEBI" id="CHEBI:74269"/>
        <dbReference type="EC" id="2.1.1.228"/>
    </reaction>
</comment>
<comment type="subunit">
    <text evidence="1">Monomer.</text>
</comment>
<comment type="subcellular location">
    <subcellularLocation>
        <location evidence="1">Mitochondrion matrix</location>
    </subcellularLocation>
    <subcellularLocation>
        <location evidence="1">Nucleus</location>
    </subcellularLocation>
    <subcellularLocation>
        <location evidence="1">Cytoplasm</location>
    </subcellularLocation>
    <text evidence="1">Predominantly in the mitochondria and in the nucleus.</text>
</comment>
<comment type="similarity">
    <text evidence="3">Belongs to the class I-like SAM-binding methyltransferase superfamily. TRM5/TYW2 family.</text>
</comment>
<organism>
    <name type="scientific">Phaeodactylum tricornutum (strain CCAP 1055/1)</name>
    <dbReference type="NCBI Taxonomy" id="556484"/>
    <lineage>
        <taxon>Eukaryota</taxon>
        <taxon>Sar</taxon>
        <taxon>Stramenopiles</taxon>
        <taxon>Ochrophyta</taxon>
        <taxon>Bacillariophyta</taxon>
        <taxon>Bacillariophyceae</taxon>
        <taxon>Bacillariophycidae</taxon>
        <taxon>Naviculales</taxon>
        <taxon>Phaeodactylaceae</taxon>
        <taxon>Phaeodactylum</taxon>
    </lineage>
</organism>
<dbReference type="EC" id="2.1.1.228" evidence="1"/>
<dbReference type="EMBL" id="CM000617">
    <property type="protein sequence ID" value="EEC46325.1"/>
    <property type="molecule type" value="Genomic_DNA"/>
</dbReference>
<dbReference type="RefSeq" id="XP_002182424.1">
    <property type="nucleotide sequence ID" value="XM_002182388.1"/>
</dbReference>
<dbReference type="SMR" id="B7G5J1"/>
<dbReference type="STRING" id="556484.B7G5J1"/>
<dbReference type="PaxDb" id="2850-Phatr47967"/>
<dbReference type="GeneID" id="7203207"/>
<dbReference type="KEGG" id="pti:PHATRDRAFT_47967"/>
<dbReference type="eggNOG" id="KOG2078">
    <property type="taxonomic scope" value="Eukaryota"/>
</dbReference>
<dbReference type="HOGENOM" id="CLU_022610_2_3_1"/>
<dbReference type="InParanoid" id="B7G5J1"/>
<dbReference type="OrthoDB" id="43296at2759"/>
<dbReference type="Proteomes" id="UP000000759">
    <property type="component" value="Chromosome 15"/>
</dbReference>
<dbReference type="GO" id="GO:0005759">
    <property type="term" value="C:mitochondrial matrix"/>
    <property type="evidence" value="ECO:0007669"/>
    <property type="project" value="UniProtKB-SubCell"/>
</dbReference>
<dbReference type="GO" id="GO:0005634">
    <property type="term" value="C:nucleus"/>
    <property type="evidence" value="ECO:0007669"/>
    <property type="project" value="UniProtKB-SubCell"/>
</dbReference>
<dbReference type="GO" id="GO:0052906">
    <property type="term" value="F:tRNA (guanine(37)-N1)-methyltransferase activity"/>
    <property type="evidence" value="ECO:0007669"/>
    <property type="project" value="UniProtKB-UniRule"/>
</dbReference>
<dbReference type="GO" id="GO:0002939">
    <property type="term" value="P:tRNA N1-guanine methylation"/>
    <property type="evidence" value="ECO:0007669"/>
    <property type="project" value="TreeGrafter"/>
</dbReference>
<dbReference type="CDD" id="cd02440">
    <property type="entry name" value="AdoMet_MTases"/>
    <property type="match status" value="1"/>
</dbReference>
<dbReference type="FunFam" id="3.30.300.110:FF:000001">
    <property type="entry name" value="tRNA (guanine(37)-N1)-methyltransferase"/>
    <property type="match status" value="1"/>
</dbReference>
<dbReference type="Gene3D" id="3.30.300.110">
    <property type="entry name" value="Met-10+ protein-like domains"/>
    <property type="match status" value="1"/>
</dbReference>
<dbReference type="Gene3D" id="3.40.50.150">
    <property type="entry name" value="Vaccinia Virus protein VP39"/>
    <property type="match status" value="1"/>
</dbReference>
<dbReference type="HAMAP" id="MF_03152">
    <property type="entry name" value="TRM5"/>
    <property type="match status" value="1"/>
</dbReference>
<dbReference type="InterPro" id="IPR030382">
    <property type="entry name" value="MeTrfase_TRM5/TYW2"/>
</dbReference>
<dbReference type="InterPro" id="IPR029063">
    <property type="entry name" value="SAM-dependent_MTases_sf"/>
</dbReference>
<dbReference type="InterPro" id="IPR056743">
    <property type="entry name" value="TRM5-TYW2-like_MTfase"/>
</dbReference>
<dbReference type="InterPro" id="IPR056744">
    <property type="entry name" value="TRM5/TYW2-like_N"/>
</dbReference>
<dbReference type="InterPro" id="IPR025792">
    <property type="entry name" value="tRNA_Gua_MeTrfase_euk"/>
</dbReference>
<dbReference type="PANTHER" id="PTHR23245:SF43">
    <property type="entry name" value="TRNA (GUANINE(37)-N1)-METHYLTRANSFERASE 2"/>
    <property type="match status" value="1"/>
</dbReference>
<dbReference type="PANTHER" id="PTHR23245">
    <property type="entry name" value="TRNA METHYLTRANSFERASE"/>
    <property type="match status" value="1"/>
</dbReference>
<dbReference type="Pfam" id="PF02475">
    <property type="entry name" value="TRM5-TYW2_MTfase"/>
    <property type="match status" value="1"/>
</dbReference>
<dbReference type="Pfam" id="PF25133">
    <property type="entry name" value="TYW2_N_2"/>
    <property type="match status" value="1"/>
</dbReference>
<dbReference type="SUPFAM" id="SSF53335">
    <property type="entry name" value="S-adenosyl-L-methionine-dependent methyltransferases"/>
    <property type="match status" value="1"/>
</dbReference>
<dbReference type="PROSITE" id="PS51684">
    <property type="entry name" value="SAM_MT_TRM5_TYW2"/>
    <property type="match status" value="1"/>
</dbReference>
<sequence length="587" mass="66387">MTTRVTGNERRGRQLLLRFSGFLSAALTVMALITATRALAPVVAYIAPQRVRSHFMRRAFASGNCRSRRFSVLRSTVGTETRNENNITTPYHSPLPTSRYVYQSSRTLSSRNPALPLESTLMHSNANELTDVELKNLVAHWRDHPVLNPMVTFRSWVVPIKGKMIQAILNSKSLQPYLASRHELLQEMHVRLKIVRDYTDSTDGTEKLILLHPDTPPLSELPADVQQLLRNCQIHENGPVMPTKFTYKDFTASYILSQLLPIAVHPPPTAFETIGHVAHLNLKERHWPYRFLIGQVLLETLPLIESVINKVGEVSGPYRTYDFGLLAGRNDTRVKLTESGVQLQFDLADVYWCSRLSEERQRLLRTFQPGQIIADPFCGVGALCLLAASLPQRNCTIWANDWNPKAVEYLRENARRNHVSDRIERLQCGDAYDFLMDMGLQQHQKASTRSRKEDVTNKDGNHVTPTEPMRLPDHVVMNYPVEAPKFLGALRWWPVPPSSRRGSTTRDGGIGSVIVPRVHVYTFARADPTTDRDAEEVAVDLVAANLLPLGNTIHCRTEMNEDYDCDIQVHPVRDVAPGKVVLCGDFR</sequence>
<gene>
    <name type="ORF">PHATRDRAFT_47967</name>
</gene>
<accession>B7G5J1</accession>
<proteinExistence type="inferred from homology"/>
<name>TRM52_PHATC</name>
<evidence type="ECO:0000255" key="1">
    <source>
        <dbReference type="HAMAP-Rule" id="MF_03152"/>
    </source>
</evidence>
<evidence type="ECO:0000256" key="2">
    <source>
        <dbReference type="SAM" id="MobiDB-lite"/>
    </source>
</evidence>
<evidence type="ECO:0000305" key="3"/>
<protein>
    <recommendedName>
        <fullName evidence="1">tRNA (guanine(37)-N(1))-methyltransferase 2</fullName>
        <ecNumber evidence="1">2.1.1.228</ecNumber>
    </recommendedName>
    <alternativeName>
        <fullName evidence="1">M1G-methyltransferase 2</fullName>
    </alternativeName>
    <alternativeName>
        <fullName evidence="1">tRNA [GM37] methyltransferase 2</fullName>
    </alternativeName>
    <alternativeName>
        <fullName evidence="1">tRNA methyltransferase 5 homolog 2</fullName>
    </alternativeName>
</protein>
<feature type="chain" id="PRO_0000414154" description="tRNA (guanine(37)-N(1))-methyltransferase 2">
    <location>
        <begin position="1"/>
        <end position="587"/>
    </location>
</feature>
<feature type="region of interest" description="Disordered" evidence="2">
    <location>
        <begin position="446"/>
        <end position="469"/>
    </location>
</feature>
<feature type="compositionally biased region" description="Basic and acidic residues" evidence="2">
    <location>
        <begin position="450"/>
        <end position="461"/>
    </location>
</feature>
<feature type="binding site" evidence="1">
    <location>
        <position position="360"/>
    </location>
    <ligand>
        <name>S-adenosyl-L-methionine</name>
        <dbReference type="ChEBI" id="CHEBI:59789"/>
    </ligand>
</feature>
<feature type="binding site" evidence="1">
    <location>
        <begin position="430"/>
        <end position="431"/>
    </location>
    <ligand>
        <name>S-adenosyl-L-methionine</name>
        <dbReference type="ChEBI" id="CHEBI:59789"/>
    </ligand>
</feature>
<feature type="binding site" evidence="1">
    <location>
        <position position="478"/>
    </location>
    <ligand>
        <name>S-adenosyl-L-methionine</name>
        <dbReference type="ChEBI" id="CHEBI:59789"/>
    </ligand>
</feature>